<feature type="chain" id="PRO_0000414038" description="Protein WEAK CHLOROPLAST MOVEMENT UNDER BLUE LIGHT 1">
    <location>
        <begin position="1"/>
        <end position="807"/>
    </location>
</feature>
<feature type="region of interest" description="Disordered" evidence="2">
    <location>
        <begin position="1"/>
        <end position="162"/>
    </location>
</feature>
<feature type="region of interest" description="Disordered" evidence="2">
    <location>
        <begin position="532"/>
        <end position="565"/>
    </location>
</feature>
<feature type="region of interest" description="Disordered" evidence="2">
    <location>
        <begin position="722"/>
        <end position="789"/>
    </location>
</feature>
<feature type="coiled-coil region" evidence="1">
    <location>
        <begin position="191"/>
        <end position="429"/>
    </location>
</feature>
<feature type="coiled-coil region" evidence="1">
    <location>
        <begin position="457"/>
        <end position="489"/>
    </location>
</feature>
<feature type="coiled-coil region" evidence="1">
    <location>
        <begin position="516"/>
        <end position="621"/>
    </location>
</feature>
<feature type="coiled-coil region" evidence="1">
    <location>
        <begin position="664"/>
        <end position="724"/>
    </location>
</feature>
<feature type="compositionally biased region" description="Polar residues" evidence="2">
    <location>
        <begin position="31"/>
        <end position="40"/>
    </location>
</feature>
<feature type="compositionally biased region" description="Low complexity" evidence="2">
    <location>
        <begin position="46"/>
        <end position="73"/>
    </location>
</feature>
<feature type="compositionally biased region" description="Polar residues" evidence="2">
    <location>
        <begin position="138"/>
        <end position="157"/>
    </location>
</feature>
<feature type="compositionally biased region" description="Basic and acidic residues" evidence="2">
    <location>
        <begin position="537"/>
        <end position="548"/>
    </location>
</feature>
<feature type="compositionally biased region" description="Basic and acidic residues" evidence="2">
    <location>
        <begin position="722"/>
        <end position="732"/>
    </location>
</feature>
<feature type="compositionally biased region" description="Basic and acidic residues" evidence="2">
    <location>
        <begin position="739"/>
        <end position="749"/>
    </location>
</feature>
<feature type="compositionally biased region" description="Polar residues" evidence="2">
    <location>
        <begin position="761"/>
        <end position="781"/>
    </location>
</feature>
<feature type="modified residue" description="Phosphoserine" evidence="5">
    <location>
        <position position="148"/>
    </location>
</feature>
<feature type="sequence conflict" description="In Ref. 3; BAF00674." evidence="4" ref="3">
    <original>E</original>
    <variation>A</variation>
    <location>
        <position position="558"/>
    </location>
</feature>
<protein>
    <recommendedName>
        <fullName>Protein WEAK CHLOROPLAST MOVEMENT UNDER BLUE LIGHT 1</fullName>
        <shortName>Protein WEB1</shortName>
    </recommendedName>
</protein>
<evidence type="ECO:0000255" key="1"/>
<evidence type="ECO:0000256" key="2">
    <source>
        <dbReference type="SAM" id="MobiDB-lite"/>
    </source>
</evidence>
<evidence type="ECO:0000269" key="3">
    <source>
    </source>
</evidence>
<evidence type="ECO:0000305" key="4"/>
<evidence type="ECO:0007744" key="5">
    <source>
    </source>
</evidence>
<dbReference type="EMBL" id="AC002505">
    <property type="protein sequence ID" value="AAC14505.1"/>
    <property type="molecule type" value="Genomic_DNA"/>
</dbReference>
<dbReference type="EMBL" id="CP002685">
    <property type="protein sequence ID" value="AEC07859.1"/>
    <property type="molecule type" value="Genomic_DNA"/>
</dbReference>
<dbReference type="EMBL" id="CP002685">
    <property type="protein sequence ID" value="ANM63180.1"/>
    <property type="molecule type" value="Genomic_DNA"/>
</dbReference>
<dbReference type="EMBL" id="AK228775">
    <property type="protein sequence ID" value="BAF00674.1"/>
    <property type="molecule type" value="mRNA"/>
</dbReference>
<dbReference type="PIR" id="T00990">
    <property type="entry name" value="T00990"/>
</dbReference>
<dbReference type="RefSeq" id="NP_001325286.1">
    <property type="nucleotide sequence ID" value="NM_001336076.1"/>
</dbReference>
<dbReference type="RefSeq" id="NP_180225.1">
    <property type="nucleotide sequence ID" value="NM_128214.3"/>
</dbReference>
<dbReference type="SMR" id="O48724"/>
<dbReference type="BioGRID" id="2550">
    <property type="interactions" value="3"/>
</dbReference>
<dbReference type="FunCoup" id="O48724">
    <property type="interactions" value="605"/>
</dbReference>
<dbReference type="IntAct" id="O48724">
    <property type="interactions" value="1"/>
</dbReference>
<dbReference type="STRING" id="3702.O48724"/>
<dbReference type="iPTMnet" id="O48724"/>
<dbReference type="PaxDb" id="3702-AT2G26570.1"/>
<dbReference type="ProteomicsDB" id="242487"/>
<dbReference type="EnsemblPlants" id="AT2G26570.1">
    <property type="protein sequence ID" value="AT2G26570.1"/>
    <property type="gene ID" value="AT2G26570"/>
</dbReference>
<dbReference type="EnsemblPlants" id="AT2G26570.2">
    <property type="protein sequence ID" value="AT2G26570.2"/>
    <property type="gene ID" value="AT2G26570"/>
</dbReference>
<dbReference type="GeneID" id="817198"/>
<dbReference type="Gramene" id="AT2G26570.1">
    <property type="protein sequence ID" value="AT2G26570.1"/>
    <property type="gene ID" value="AT2G26570"/>
</dbReference>
<dbReference type="Gramene" id="AT2G26570.2">
    <property type="protein sequence ID" value="AT2G26570.2"/>
    <property type="gene ID" value="AT2G26570"/>
</dbReference>
<dbReference type="KEGG" id="ath:AT2G26570"/>
<dbReference type="Araport" id="AT2G26570"/>
<dbReference type="TAIR" id="AT2G26570">
    <property type="gene designation" value="WEB1"/>
</dbReference>
<dbReference type="eggNOG" id="ENOG502QQFI">
    <property type="taxonomic scope" value="Eukaryota"/>
</dbReference>
<dbReference type="HOGENOM" id="CLU_008410_1_1_1"/>
<dbReference type="InParanoid" id="O48724"/>
<dbReference type="OMA" id="STENMSH"/>
<dbReference type="PhylomeDB" id="O48724"/>
<dbReference type="PRO" id="PR:O48724"/>
<dbReference type="Proteomes" id="UP000006548">
    <property type="component" value="Chromosome 2"/>
</dbReference>
<dbReference type="ExpressionAtlas" id="O48724">
    <property type="expression patterns" value="baseline and differential"/>
</dbReference>
<dbReference type="GO" id="GO:0005829">
    <property type="term" value="C:cytosol"/>
    <property type="evidence" value="ECO:0000314"/>
    <property type="project" value="TAIR"/>
</dbReference>
<dbReference type="GO" id="GO:0005777">
    <property type="term" value="C:peroxisome"/>
    <property type="evidence" value="ECO:0007005"/>
    <property type="project" value="TAIR"/>
</dbReference>
<dbReference type="GO" id="GO:0009904">
    <property type="term" value="P:chloroplast accumulation movement"/>
    <property type="evidence" value="ECO:0000315"/>
    <property type="project" value="TAIR"/>
</dbReference>
<dbReference type="GO" id="GO:0009903">
    <property type="term" value="P:chloroplast avoidance movement"/>
    <property type="evidence" value="ECO:0000315"/>
    <property type="project" value="TAIR"/>
</dbReference>
<dbReference type="InterPro" id="IPR008545">
    <property type="entry name" value="Web"/>
</dbReference>
<dbReference type="PANTHER" id="PTHR32054">
    <property type="entry name" value="HEAVY CHAIN, PUTATIVE, EXPRESSED-RELATED-RELATED"/>
    <property type="match status" value="1"/>
</dbReference>
<dbReference type="PANTHER" id="PTHR32054:SF31">
    <property type="entry name" value="PROTEIN WEAK CHLOROPLAST MOVEMENT UNDER BLUE LIGHT 1"/>
    <property type="match status" value="1"/>
</dbReference>
<dbReference type="Pfam" id="PF05701">
    <property type="entry name" value="WEMBL"/>
    <property type="match status" value="1"/>
</dbReference>
<sequence>MEDLKTVEASDNVVSDNVEKVNPELIDSTIRESNIQSATKVDNIPQSQTDTEETQQSQTDTEETQQSQTDDTTGNAKIYVDDTFSPSDAATAAVLTGKDSTSTTIVEEVMEPDEIGLPSVKITEAATGTARNGGGSPRTVSSPRFSGSPVSTGTPKNVDSHRGLIDTAAPFESVKEAVSKFGGITDWKSHRMQAVERRKLIEEELKKIHEEIPEYKTHSETAEAAKLQVLKELESTKRLIEQLKLNLDKAQTEEQQAKQDSELAKLRVEEMEQGIAEDVSVAAKAQLEVAKARHTTAITELSSVKEELETLHKEYDALVQDKDVAVKKVEEAMLASKEVEKTVEELTIELIATKESLESAHASHLEAEEQRIGAAMARDQDTHRWEKELKQAEEELQRLNQQIHSSKDLKSKLDTASALLLDLKAELVAYMESKLKQEACDSTTNTDPSTENMSHPDLHAAVASAKKELEEVNVNIEKAAAEVSCLKLASSSLQLELEKEKSTLASIKQREGMASIAVASIEAEIDRTRSEIASVQSKEKDAREKMVELPKQLQQAAEEADEAKSLAEVAREELRKAKEEAEQAKAGASTMESRLFAAQKEIEAAKASERLALAAIKALEESESTLKANDTDSPRSVTLSLEEYYELSKRAHEAEELANARVAAAVSRIEEAKETEMRSLEKLEEVNRDMDARKKALKEATEKAEKAKEGKLGVEQELRKWRAEHEQKRKAGDGVNTEKNLKESFEGGKMEQSPEAVVYASSPSESYGTEENSETNLSPQTKSRKKKKKLSFPRFFMFLSKKKSHNN</sequence>
<name>WEB1_ARATH</name>
<organism>
    <name type="scientific">Arabidopsis thaliana</name>
    <name type="common">Mouse-ear cress</name>
    <dbReference type="NCBI Taxonomy" id="3702"/>
    <lineage>
        <taxon>Eukaryota</taxon>
        <taxon>Viridiplantae</taxon>
        <taxon>Streptophyta</taxon>
        <taxon>Embryophyta</taxon>
        <taxon>Tracheophyta</taxon>
        <taxon>Spermatophyta</taxon>
        <taxon>Magnoliopsida</taxon>
        <taxon>eudicotyledons</taxon>
        <taxon>Gunneridae</taxon>
        <taxon>Pentapetalae</taxon>
        <taxon>rosids</taxon>
        <taxon>malvids</taxon>
        <taxon>Brassicales</taxon>
        <taxon>Brassicaceae</taxon>
        <taxon>Camelineae</taxon>
        <taxon>Arabidopsis</taxon>
    </lineage>
</organism>
<proteinExistence type="evidence at protein level"/>
<accession>O48724</accession>
<accession>Q0WQC5</accession>
<comment type="function">
    <text evidence="3">Required for the chloroplast avoidance response under high intensity blue light. This avoidance response consists in the relocation of chloroplasts on the anticlinal side of exposed cells. Acts in association with PMI2 to maintain the velocity of chloroplast photorelocation movement via cp-actin filaments regulation.</text>
</comment>
<comment type="subunit">
    <text evidence="3">Interacts with PMI2.</text>
</comment>
<comment type="interaction">
    <interactant intactId="EBI-4408440">
        <id>O48724</id>
    </interactant>
    <interactant intactId="EBI-4408425">
        <id>Q9C9N6</id>
        <label>PMI2</label>
    </interactant>
    <organismsDiffer>false</organismsDiffer>
    <experiments>6</experiments>
</comment>
<comment type="subcellular location">
    <subcellularLocation>
        <location evidence="3">Cytoplasm</location>
    </subcellularLocation>
</comment>
<comment type="tissue specificity">
    <text evidence="3">Ubiquitous but preferentially in chloroplast-containing tissues.</text>
</comment>
<comment type="disruption phenotype">
    <text evidence="3">Deficient chloroplast response.</text>
</comment>
<comment type="similarity">
    <text evidence="4">Belongs to the WEB family.</text>
</comment>
<reference key="1">
    <citation type="journal article" date="1999" name="Nature">
        <title>Sequence and analysis of chromosome 2 of the plant Arabidopsis thaliana.</title>
        <authorList>
            <person name="Lin X."/>
            <person name="Kaul S."/>
            <person name="Rounsley S.D."/>
            <person name="Shea T.P."/>
            <person name="Benito M.-I."/>
            <person name="Town C.D."/>
            <person name="Fujii C.Y."/>
            <person name="Mason T.M."/>
            <person name="Bowman C.L."/>
            <person name="Barnstead M.E."/>
            <person name="Feldblyum T.V."/>
            <person name="Buell C.R."/>
            <person name="Ketchum K.A."/>
            <person name="Lee J.J."/>
            <person name="Ronning C.M."/>
            <person name="Koo H.L."/>
            <person name="Moffat K.S."/>
            <person name="Cronin L.A."/>
            <person name="Shen M."/>
            <person name="Pai G."/>
            <person name="Van Aken S."/>
            <person name="Umayam L."/>
            <person name="Tallon L.J."/>
            <person name="Gill J.E."/>
            <person name="Adams M.D."/>
            <person name="Carrera A.J."/>
            <person name="Creasy T.H."/>
            <person name="Goodman H.M."/>
            <person name="Somerville C.R."/>
            <person name="Copenhaver G.P."/>
            <person name="Preuss D."/>
            <person name="Nierman W.C."/>
            <person name="White O."/>
            <person name="Eisen J.A."/>
            <person name="Salzberg S.L."/>
            <person name="Fraser C.M."/>
            <person name="Venter J.C."/>
        </authorList>
    </citation>
    <scope>NUCLEOTIDE SEQUENCE [LARGE SCALE GENOMIC DNA]</scope>
    <source>
        <strain>cv. Columbia</strain>
    </source>
</reference>
<reference key="2">
    <citation type="journal article" date="2017" name="Plant J.">
        <title>Araport11: a complete reannotation of the Arabidopsis thaliana reference genome.</title>
        <authorList>
            <person name="Cheng C.Y."/>
            <person name="Krishnakumar V."/>
            <person name="Chan A.P."/>
            <person name="Thibaud-Nissen F."/>
            <person name="Schobel S."/>
            <person name="Town C.D."/>
        </authorList>
    </citation>
    <scope>GENOME REANNOTATION</scope>
    <source>
        <strain>cv. Columbia</strain>
    </source>
</reference>
<reference key="3">
    <citation type="submission" date="2006-07" db="EMBL/GenBank/DDBJ databases">
        <title>Large-scale analysis of RIKEN Arabidopsis full-length (RAFL) cDNAs.</title>
        <authorList>
            <person name="Totoki Y."/>
            <person name="Seki M."/>
            <person name="Ishida J."/>
            <person name="Nakajima M."/>
            <person name="Enju A."/>
            <person name="Kamiya A."/>
            <person name="Narusaka M."/>
            <person name="Shin-i T."/>
            <person name="Nakagawa M."/>
            <person name="Sakamoto N."/>
            <person name="Oishi K."/>
            <person name="Kohara Y."/>
            <person name="Kobayashi M."/>
            <person name="Toyoda A."/>
            <person name="Sakaki Y."/>
            <person name="Sakurai T."/>
            <person name="Iida K."/>
            <person name="Akiyama K."/>
            <person name="Satou M."/>
            <person name="Toyoda T."/>
            <person name="Konagaya A."/>
            <person name="Carninci P."/>
            <person name="Kawai J."/>
            <person name="Hayashizaki Y."/>
            <person name="Shinozaki K."/>
        </authorList>
    </citation>
    <scope>NUCLEOTIDE SEQUENCE [LARGE SCALE MRNA]</scope>
    <source>
        <strain>cv. Columbia</strain>
    </source>
</reference>
<reference key="4">
    <citation type="journal article" date="2009" name="Plant Physiol.">
        <title>Large-scale Arabidopsis phosphoproteome profiling reveals novel chloroplast kinase substrates and phosphorylation networks.</title>
        <authorList>
            <person name="Reiland S."/>
            <person name="Messerli G."/>
            <person name="Baerenfaller K."/>
            <person name="Gerrits B."/>
            <person name="Endler A."/>
            <person name="Grossmann J."/>
            <person name="Gruissem W."/>
            <person name="Baginsky S."/>
        </authorList>
    </citation>
    <scope>PHOSPHORYLATION [LARGE SCALE ANALYSIS] AT SER-148</scope>
    <scope>IDENTIFICATION BY MASS SPECTROMETRY [LARGE SCALE ANALYSIS]</scope>
</reference>
<reference key="5">
    <citation type="journal article" date="2010" name="Proc. Natl. Acad. Sci. U.S.A.">
        <title>Two interacting coiled-coil proteins, WEB1 and PMI2, maintain the chloroplast photorelocation movement velocity in Arabidopsis.</title>
        <authorList>
            <person name="Kodama Y."/>
            <person name="Suetsugu N."/>
            <person name="Kong S.G."/>
            <person name="Wada M."/>
        </authorList>
    </citation>
    <scope>FUNCTION</scope>
    <scope>DISRUPTION PHENOTYPE</scope>
    <scope>TISSUE SPECIFICITY</scope>
    <scope>SUBCELLULAR LOCATION</scope>
    <scope>GENE FAMILY</scope>
    <scope>INTERACTION WITH PMI2</scope>
</reference>
<gene>
    <name type="primary">WEB1</name>
    <name type="ordered locus">At2g26570</name>
    <name type="ORF">T9J22.24</name>
</gene>
<keyword id="KW-0175">Coiled coil</keyword>
<keyword id="KW-0963">Cytoplasm</keyword>
<keyword id="KW-0597">Phosphoprotein</keyword>
<keyword id="KW-1185">Reference proteome</keyword>